<dbReference type="EMBL" id="AJ539470">
    <property type="protein sequence ID" value="CAD62434.1"/>
    <property type="molecule type" value="mRNA"/>
</dbReference>
<dbReference type="EMBL" id="FO081105">
    <property type="protein sequence ID" value="CCD69136.1"/>
    <property type="molecule type" value="Genomic_DNA"/>
</dbReference>
<dbReference type="RefSeq" id="NP_498828.2">
    <property type="nucleotide sequence ID" value="NM_066427.5"/>
</dbReference>
<dbReference type="SMR" id="P34402"/>
<dbReference type="BioGRID" id="41376">
    <property type="interactions" value="21"/>
</dbReference>
<dbReference type="FunCoup" id="P34402">
    <property type="interactions" value="302"/>
</dbReference>
<dbReference type="IntAct" id="P34402">
    <property type="interactions" value="12"/>
</dbReference>
<dbReference type="STRING" id="6239.F10E9.8.1"/>
<dbReference type="PaxDb" id="6239-F10E9.8"/>
<dbReference type="EnsemblMetazoa" id="F10E9.8.1">
    <property type="protein sequence ID" value="F10E9.8.1"/>
    <property type="gene ID" value="WBGene00004726"/>
</dbReference>
<dbReference type="GeneID" id="176172"/>
<dbReference type="KEGG" id="cel:CELE_F10E9.8"/>
<dbReference type="UCSC" id="F10E9.8">
    <property type="organism name" value="c. elegans"/>
</dbReference>
<dbReference type="AGR" id="WB:WBGene00004726"/>
<dbReference type="CTD" id="40859"/>
<dbReference type="WormBase" id="F10E9.8">
    <property type="protein sequence ID" value="CE29756"/>
    <property type="gene ID" value="WBGene00004726"/>
    <property type="gene designation" value="sas-4"/>
</dbReference>
<dbReference type="eggNOG" id="ENOG502SYI4">
    <property type="taxonomic scope" value="Eukaryota"/>
</dbReference>
<dbReference type="HOGENOM" id="CLU_018365_0_0_1"/>
<dbReference type="InParanoid" id="P34402"/>
<dbReference type="OMA" id="EFRLRWY"/>
<dbReference type="OrthoDB" id="5857768at2759"/>
<dbReference type="PRO" id="PR:P34402"/>
<dbReference type="Proteomes" id="UP000001940">
    <property type="component" value="Chromosome III"/>
</dbReference>
<dbReference type="Bgee" id="WBGene00004726">
    <property type="expression patterns" value="Expressed in germ line (C elegans) and 4 other cell types or tissues"/>
</dbReference>
<dbReference type="GO" id="GO:0005814">
    <property type="term" value="C:centriole"/>
    <property type="evidence" value="ECO:0000314"/>
    <property type="project" value="UniProtKB"/>
</dbReference>
<dbReference type="GO" id="GO:0005813">
    <property type="term" value="C:centrosome"/>
    <property type="evidence" value="ECO:0007669"/>
    <property type="project" value="UniProtKB-SubCell"/>
</dbReference>
<dbReference type="GO" id="GO:0005737">
    <property type="term" value="C:cytoplasm"/>
    <property type="evidence" value="ECO:0007669"/>
    <property type="project" value="UniProtKB-KW"/>
</dbReference>
<dbReference type="GO" id="GO:0007099">
    <property type="term" value="P:centriole replication"/>
    <property type="evidence" value="ECO:0000315"/>
    <property type="project" value="WormBase"/>
</dbReference>
<dbReference type="GO" id="GO:0045185">
    <property type="term" value="P:maintenance of protein location"/>
    <property type="evidence" value="ECO:0000315"/>
    <property type="project" value="WormBase"/>
</dbReference>
<reference key="1">
    <citation type="journal article" date="2003" name="Dev. Cell">
        <title>SAS-4 is essential for centrosome duplication in C. elegans and is recruited to daughter centrioles once per cell cycle.</title>
        <authorList>
            <person name="Leidel S."/>
            <person name="Goenczy P."/>
        </authorList>
    </citation>
    <scope>NUCLEOTIDE SEQUENCE [MRNA]</scope>
    <scope>FUNCTION</scope>
    <scope>SUBCELLULAR LOCATION</scope>
    <scope>DEVELOPMENTAL STAGE</scope>
</reference>
<reference key="2">
    <citation type="journal article" date="1994" name="Nature">
        <title>2.2 Mb of contiguous nucleotide sequence from chromosome III of C. elegans.</title>
        <authorList>
            <person name="Wilson R."/>
            <person name="Ainscough R."/>
            <person name="Anderson K."/>
            <person name="Baynes C."/>
            <person name="Berks M."/>
            <person name="Bonfield J."/>
            <person name="Burton J."/>
            <person name="Connell M."/>
            <person name="Copsey T."/>
            <person name="Cooper J."/>
            <person name="Coulson A."/>
            <person name="Craxton M."/>
            <person name="Dear S."/>
            <person name="Du Z."/>
            <person name="Durbin R."/>
            <person name="Favello A."/>
            <person name="Fraser A."/>
            <person name="Fulton L."/>
            <person name="Gardner A."/>
            <person name="Green P."/>
            <person name="Hawkins T."/>
            <person name="Hillier L."/>
            <person name="Jier M."/>
            <person name="Johnston L."/>
            <person name="Jones M."/>
            <person name="Kershaw J."/>
            <person name="Kirsten J."/>
            <person name="Laisster N."/>
            <person name="Latreille P."/>
            <person name="Lightning J."/>
            <person name="Lloyd C."/>
            <person name="Mortimore B."/>
            <person name="O'Callaghan M."/>
            <person name="Parsons J."/>
            <person name="Percy C."/>
            <person name="Rifken L."/>
            <person name="Roopra A."/>
            <person name="Saunders D."/>
            <person name="Shownkeen R."/>
            <person name="Sims M."/>
            <person name="Smaldon N."/>
            <person name="Smith A."/>
            <person name="Smith M."/>
            <person name="Sonnhammer E."/>
            <person name="Staden R."/>
            <person name="Sulston J."/>
            <person name="Thierry-Mieg J."/>
            <person name="Thomas K."/>
            <person name="Vaudin M."/>
            <person name="Vaughan K."/>
            <person name="Waterston R."/>
            <person name="Watson A."/>
            <person name="Weinstock L."/>
            <person name="Wilkinson-Sproat J."/>
            <person name="Wohldman P."/>
        </authorList>
    </citation>
    <scope>NUCLEOTIDE SEQUENCE [LARGE SCALE GENOMIC DNA]</scope>
    <source>
        <strain>Bristol N2</strain>
    </source>
</reference>
<reference key="3">
    <citation type="journal article" date="1998" name="Science">
        <title>Genome sequence of the nematode C. elegans: a platform for investigating biology.</title>
        <authorList>
            <consortium name="The C. elegans sequencing consortium"/>
        </authorList>
    </citation>
    <scope>NUCLEOTIDE SEQUENCE [LARGE SCALE GENOMIC DNA]</scope>
    <source>
        <strain>Bristol N2</strain>
    </source>
</reference>
<reference key="4">
    <citation type="journal article" date="2003" name="Cell">
        <title>SAS-4 is a C. elegans centriolar protein that controls centrosome size.</title>
        <authorList>
            <person name="Kirkham M."/>
            <person name="Mueller-Reichert T."/>
            <person name="Oegema K."/>
            <person name="Grill S."/>
            <person name="Hyman A.A."/>
        </authorList>
    </citation>
    <scope>FUNCTION</scope>
    <scope>SUBCELLULAR LOCATION</scope>
    <scope>DEVELOPMENTAL STAGE</scope>
</reference>
<reference key="5">
    <citation type="journal article" date="2009" name="Genes Dev.">
        <title>The hydrolethalus syndrome protein HYLS-1 links core centriole structure to cilia formation.</title>
        <authorList>
            <person name="Dammermann A."/>
            <person name="Pemble H."/>
            <person name="Mitchell B.J."/>
            <person name="McLeod I."/>
            <person name="Yates J.R. III"/>
            <person name="Kintner C."/>
            <person name="Desai A.B."/>
            <person name="Oegema K."/>
        </authorList>
    </citation>
    <scope>INTERACTION WITH HYLS-1</scope>
</reference>
<accession>P34402</accession>
<gene>
    <name type="primary">sas-4</name>
    <name type="ORF">F10E9.8</name>
</gene>
<keyword id="KW-0131">Cell cycle</keyword>
<keyword id="KW-0175">Coiled coil</keyword>
<keyword id="KW-0963">Cytoplasm</keyword>
<keyword id="KW-0206">Cytoskeleton</keyword>
<keyword id="KW-0217">Developmental protein</keyword>
<keyword id="KW-1185">Reference proteome</keyword>
<name>SAS4_CAEEL</name>
<sequence>MASDENIGADGEQKPSRPFLRKGQGTARFRMPRNNKTSAGAPPTSELSSASSPSINVPRFSLSNALPNSARTVDSGISNEDETRPPTTASLPMDQPSLSSSPENRLNPAPSVAEEHGHSGQHAEEEEDNDTDEVSAMPSFVPDEPSTLVNSDHELSDDALKYKNAAAEFKAFERRMDSMRSASTITTSLATPSSCAPSNSSEPPTRSTPIMNDLGVGPNNHNWPSSMQELSGISLETPQARPLGSNRINQLVRSEAQTGISLLQHHERPTVTAPLRRNDMMNSSRQNPQNGNVQDENRPEHVYDQPIHVPGSSLDRQKLEIEIRRHRNLNIQLRDTIAHLDYAEESVHTTKRQLEEKISEVNNFKKELIEEFKKCKKGVEEEFEKKFEKIKEDYDELYEKLKRDQRDLERDQKILKKGTGERNKEFTETIATLRDKLRASETKNAQYRQDIRVRDEKLKKKDEEIEKLQKDGNRLKSTLQTLEKRVKQLRTEKERDDKEKEMFAKVAMNRKTSNPVPPVLNQSVPISITSNGPSRHPSSSSLTTFRKPSTSNRERGVSWADEPNEQSLEAVPQEFLMMPVKEMPGKFGKCTIYRDSLGETSKVTDTIANGLLFEYSNGDLRWVNRQNAVNIYISAVDKTVRIDLPTYNISIIHTFQRQVEVLRPGNNITLISIKRREVRTDLIYQNGMYKTEIFNRDGRYVTKDFSNQEVSRKYNPGTHTYRDNQCRYVLVTDYNDFELVEPEFRLRWYQGDPTGLNNQYILKIIGRPECSEKTLRLEVNLSTCEGTLETAEMIGDKRRKTTLFQWKK</sequence>
<evidence type="ECO:0000255" key="1"/>
<evidence type="ECO:0000256" key="2">
    <source>
        <dbReference type="SAM" id="MobiDB-lite"/>
    </source>
</evidence>
<evidence type="ECO:0000269" key="3">
    <source>
    </source>
</evidence>
<evidence type="ECO:0000269" key="4">
    <source>
    </source>
</evidence>
<evidence type="ECO:0000269" key="5">
    <source>
    </source>
</evidence>
<feature type="chain" id="PRO_0000097592" description="Spindle assembly abnormal protein 4">
    <location>
        <begin position="1"/>
        <end position="808"/>
    </location>
</feature>
<feature type="region of interest" description="Disordered" evidence="2">
    <location>
        <begin position="1"/>
        <end position="151"/>
    </location>
</feature>
<feature type="region of interest" description="Disordered" evidence="2">
    <location>
        <begin position="187"/>
        <end position="206"/>
    </location>
</feature>
<feature type="region of interest" description="Disordered" evidence="2">
    <location>
        <begin position="271"/>
        <end position="298"/>
    </location>
</feature>
<feature type="region of interest" description="Disordered" evidence="2">
    <location>
        <begin position="511"/>
        <end position="564"/>
    </location>
</feature>
<feature type="coiled-coil region" evidence="1">
    <location>
        <begin position="161"/>
        <end position="181"/>
    </location>
</feature>
<feature type="coiled-coil region" evidence="1">
    <location>
        <begin position="314"/>
        <end position="503"/>
    </location>
</feature>
<feature type="compositionally biased region" description="Low complexity" evidence="2">
    <location>
        <begin position="42"/>
        <end position="54"/>
    </location>
</feature>
<feature type="compositionally biased region" description="Polar residues" evidence="2">
    <location>
        <begin position="61"/>
        <end position="78"/>
    </location>
</feature>
<feature type="compositionally biased region" description="Polar residues" evidence="2">
    <location>
        <begin position="85"/>
        <end position="104"/>
    </location>
</feature>
<feature type="compositionally biased region" description="Basic and acidic residues" evidence="2">
    <location>
        <begin position="113"/>
        <end position="123"/>
    </location>
</feature>
<feature type="compositionally biased region" description="Acidic residues" evidence="2">
    <location>
        <begin position="124"/>
        <end position="133"/>
    </location>
</feature>
<feature type="compositionally biased region" description="Polar residues" evidence="2">
    <location>
        <begin position="280"/>
        <end position="294"/>
    </location>
</feature>
<feature type="compositionally biased region" description="Polar residues" evidence="2">
    <location>
        <begin position="511"/>
        <end position="529"/>
    </location>
</feature>
<feature type="compositionally biased region" description="Low complexity" evidence="2">
    <location>
        <begin position="530"/>
        <end position="541"/>
    </location>
</feature>
<feature type="compositionally biased region" description="Polar residues" evidence="2">
    <location>
        <begin position="542"/>
        <end position="551"/>
    </location>
</feature>
<protein>
    <recommendedName>
        <fullName>Spindle assembly abnormal protein 4</fullName>
    </recommendedName>
</protein>
<proteinExistence type="evidence at protein level"/>
<comment type="function">
    <text evidence="3 4">Required for centrosome duplication. Plays a central role in determining centrosome size.</text>
</comment>
<comment type="subunit">
    <text evidence="5">Interacts with hyls-1; leading to hyls-1 localization into newly forming centrioles.</text>
</comment>
<comment type="subcellular location">
    <subcellularLocation>
        <location evidence="3 4">Cytoplasm</location>
        <location evidence="3 4">Cytoskeleton</location>
        <location evidence="3 4">Microtubule organizing center</location>
        <location evidence="3 4">Centrosome</location>
    </subcellularLocation>
    <text>Localizes to the centrosome throughout the cell cycle. Localizes to a tiny dot in the center of centrosome. Recruited to the centrosome once per cell cycle, at the time of organelle duplication and remains stably associated after.</text>
</comment>
<comment type="developmental stage">
    <text evidence="3 4">Localizes to centrosomes both in sperm and in the syncytial part of the gonad. Staining in the gonad disappears as the meiotic nuclei cellularizes to form oocytes, presumably marking the point at which the centrioles are lost during oogenesis. In newly fertilized embryos, it is localized to a discrete spot near the sperm-derived pronucleus. Then, it remains attached to the centrosome throughout the rest of development.</text>
</comment>
<organism>
    <name type="scientific">Caenorhabditis elegans</name>
    <dbReference type="NCBI Taxonomy" id="6239"/>
    <lineage>
        <taxon>Eukaryota</taxon>
        <taxon>Metazoa</taxon>
        <taxon>Ecdysozoa</taxon>
        <taxon>Nematoda</taxon>
        <taxon>Chromadorea</taxon>
        <taxon>Rhabditida</taxon>
        <taxon>Rhabditina</taxon>
        <taxon>Rhabditomorpha</taxon>
        <taxon>Rhabditoidea</taxon>
        <taxon>Rhabditidae</taxon>
        <taxon>Peloderinae</taxon>
        <taxon>Caenorhabditis</taxon>
    </lineage>
</organism>